<organism>
    <name type="scientific">Burkholderia pseudomallei (strain 668)</name>
    <dbReference type="NCBI Taxonomy" id="320373"/>
    <lineage>
        <taxon>Bacteria</taxon>
        <taxon>Pseudomonadati</taxon>
        <taxon>Pseudomonadota</taxon>
        <taxon>Betaproteobacteria</taxon>
        <taxon>Burkholderiales</taxon>
        <taxon>Burkholderiaceae</taxon>
        <taxon>Burkholderia</taxon>
        <taxon>pseudomallei group</taxon>
    </lineage>
</organism>
<dbReference type="EC" id="7.1.2.2" evidence="1"/>
<dbReference type="EMBL" id="CP000571">
    <property type="protein sequence ID" value="ABN85569.1"/>
    <property type="molecule type" value="Genomic_DNA"/>
</dbReference>
<dbReference type="RefSeq" id="WP_011853761.1">
    <property type="nucleotide sequence ID" value="NC_009075.1"/>
</dbReference>
<dbReference type="SMR" id="A3NN58"/>
<dbReference type="KEGG" id="bpd:BURPS668_A2787"/>
<dbReference type="HOGENOM" id="CLU_010091_4_0_4"/>
<dbReference type="GO" id="GO:0005886">
    <property type="term" value="C:plasma membrane"/>
    <property type="evidence" value="ECO:0007669"/>
    <property type="project" value="UniProtKB-SubCell"/>
</dbReference>
<dbReference type="GO" id="GO:0045259">
    <property type="term" value="C:proton-transporting ATP synthase complex"/>
    <property type="evidence" value="ECO:0007669"/>
    <property type="project" value="UniProtKB-KW"/>
</dbReference>
<dbReference type="GO" id="GO:0043531">
    <property type="term" value="F:ADP binding"/>
    <property type="evidence" value="ECO:0007669"/>
    <property type="project" value="TreeGrafter"/>
</dbReference>
<dbReference type="GO" id="GO:0005524">
    <property type="term" value="F:ATP binding"/>
    <property type="evidence" value="ECO:0007669"/>
    <property type="project" value="UniProtKB-UniRule"/>
</dbReference>
<dbReference type="GO" id="GO:0046933">
    <property type="term" value="F:proton-transporting ATP synthase activity, rotational mechanism"/>
    <property type="evidence" value="ECO:0007669"/>
    <property type="project" value="UniProtKB-UniRule"/>
</dbReference>
<dbReference type="CDD" id="cd18116">
    <property type="entry name" value="ATP-synt_F1_alpha_N"/>
    <property type="match status" value="1"/>
</dbReference>
<dbReference type="CDD" id="cd01132">
    <property type="entry name" value="F1-ATPase_alpha_CD"/>
    <property type="match status" value="1"/>
</dbReference>
<dbReference type="FunFam" id="3.40.50.300:FF:004039">
    <property type="entry name" value="ATP synthase subunit alpha, mitochondrial"/>
    <property type="match status" value="1"/>
</dbReference>
<dbReference type="Gene3D" id="2.40.30.20">
    <property type="match status" value="1"/>
</dbReference>
<dbReference type="Gene3D" id="1.20.150.20">
    <property type="entry name" value="ATP synthase alpha/beta chain, C-terminal domain"/>
    <property type="match status" value="1"/>
</dbReference>
<dbReference type="Gene3D" id="3.40.50.300">
    <property type="entry name" value="P-loop containing nucleotide triphosphate hydrolases"/>
    <property type="match status" value="1"/>
</dbReference>
<dbReference type="HAMAP" id="MF_01346">
    <property type="entry name" value="ATP_synth_alpha_bact"/>
    <property type="match status" value="1"/>
</dbReference>
<dbReference type="InterPro" id="IPR023366">
    <property type="entry name" value="ATP_synth_asu-like_sf"/>
</dbReference>
<dbReference type="InterPro" id="IPR000793">
    <property type="entry name" value="ATP_synth_asu_C"/>
</dbReference>
<dbReference type="InterPro" id="IPR038376">
    <property type="entry name" value="ATP_synth_asu_C_sf"/>
</dbReference>
<dbReference type="InterPro" id="IPR033732">
    <property type="entry name" value="ATP_synth_F1_a_nt-bd_dom"/>
</dbReference>
<dbReference type="InterPro" id="IPR005294">
    <property type="entry name" value="ATP_synth_F1_asu"/>
</dbReference>
<dbReference type="InterPro" id="IPR020003">
    <property type="entry name" value="ATPase_a/bsu_AS"/>
</dbReference>
<dbReference type="InterPro" id="IPR004100">
    <property type="entry name" value="ATPase_F1/V1/A1_a/bsu_N"/>
</dbReference>
<dbReference type="InterPro" id="IPR036121">
    <property type="entry name" value="ATPase_F1/V1/A1_a/bsu_N_sf"/>
</dbReference>
<dbReference type="InterPro" id="IPR000194">
    <property type="entry name" value="ATPase_F1/V1/A1_a/bsu_nucl-bd"/>
</dbReference>
<dbReference type="InterPro" id="IPR027417">
    <property type="entry name" value="P-loop_NTPase"/>
</dbReference>
<dbReference type="NCBIfam" id="TIGR00962">
    <property type="entry name" value="atpA"/>
    <property type="match status" value="1"/>
</dbReference>
<dbReference type="NCBIfam" id="NF009884">
    <property type="entry name" value="PRK13343.1"/>
    <property type="match status" value="1"/>
</dbReference>
<dbReference type="PANTHER" id="PTHR48082">
    <property type="entry name" value="ATP SYNTHASE SUBUNIT ALPHA, MITOCHONDRIAL"/>
    <property type="match status" value="1"/>
</dbReference>
<dbReference type="PANTHER" id="PTHR48082:SF2">
    <property type="entry name" value="ATP SYNTHASE SUBUNIT ALPHA, MITOCHONDRIAL"/>
    <property type="match status" value="1"/>
</dbReference>
<dbReference type="Pfam" id="PF00006">
    <property type="entry name" value="ATP-synt_ab"/>
    <property type="match status" value="1"/>
</dbReference>
<dbReference type="Pfam" id="PF00306">
    <property type="entry name" value="ATP-synt_ab_C"/>
    <property type="match status" value="1"/>
</dbReference>
<dbReference type="Pfam" id="PF02874">
    <property type="entry name" value="ATP-synt_ab_N"/>
    <property type="match status" value="1"/>
</dbReference>
<dbReference type="SUPFAM" id="SSF47917">
    <property type="entry name" value="C-terminal domain of alpha and beta subunits of F1 ATP synthase"/>
    <property type="match status" value="1"/>
</dbReference>
<dbReference type="SUPFAM" id="SSF50615">
    <property type="entry name" value="N-terminal domain of alpha and beta subunits of F1 ATP synthase"/>
    <property type="match status" value="1"/>
</dbReference>
<dbReference type="SUPFAM" id="SSF52540">
    <property type="entry name" value="P-loop containing nucleoside triphosphate hydrolases"/>
    <property type="match status" value="1"/>
</dbReference>
<dbReference type="PROSITE" id="PS00152">
    <property type="entry name" value="ATPASE_ALPHA_BETA"/>
    <property type="match status" value="1"/>
</dbReference>
<accession>A3NN58</accession>
<feature type="chain" id="PRO_0000339026" description="ATP synthase subunit alpha 2">
    <location>
        <begin position="1"/>
        <end position="670"/>
    </location>
</feature>
<feature type="region of interest" description="Disordered" evidence="2">
    <location>
        <begin position="527"/>
        <end position="670"/>
    </location>
</feature>
<feature type="compositionally biased region" description="Basic and acidic residues" evidence="2">
    <location>
        <begin position="543"/>
        <end position="588"/>
    </location>
</feature>
<feature type="compositionally biased region" description="Low complexity" evidence="2">
    <location>
        <begin position="589"/>
        <end position="599"/>
    </location>
</feature>
<feature type="compositionally biased region" description="Basic and acidic residues" evidence="2">
    <location>
        <begin position="621"/>
        <end position="639"/>
    </location>
</feature>
<feature type="compositionally biased region" description="Low complexity" evidence="2">
    <location>
        <begin position="640"/>
        <end position="661"/>
    </location>
</feature>
<feature type="binding site" evidence="1">
    <location>
        <begin position="180"/>
        <end position="187"/>
    </location>
    <ligand>
        <name>ATP</name>
        <dbReference type="ChEBI" id="CHEBI:30616"/>
    </ligand>
</feature>
<feature type="site" description="Required for activity" evidence="1">
    <location>
        <position position="373"/>
    </location>
</feature>
<proteinExistence type="inferred from homology"/>
<evidence type="ECO:0000255" key="1">
    <source>
        <dbReference type="HAMAP-Rule" id="MF_01346"/>
    </source>
</evidence>
<evidence type="ECO:0000256" key="2">
    <source>
        <dbReference type="SAM" id="MobiDB-lite"/>
    </source>
</evidence>
<name>ATPA2_BURP6</name>
<gene>
    <name evidence="1" type="primary">atpA2</name>
    <name type="ordered locus">BURPS668_A2787</name>
</gene>
<keyword id="KW-0066">ATP synthesis</keyword>
<keyword id="KW-0067">ATP-binding</keyword>
<keyword id="KW-0997">Cell inner membrane</keyword>
<keyword id="KW-1003">Cell membrane</keyword>
<keyword id="KW-0139">CF(1)</keyword>
<keyword id="KW-0375">Hydrogen ion transport</keyword>
<keyword id="KW-0406">Ion transport</keyword>
<keyword id="KW-0472">Membrane</keyword>
<keyword id="KW-0547">Nucleotide-binding</keyword>
<keyword id="KW-1278">Translocase</keyword>
<keyword id="KW-0813">Transport</keyword>
<comment type="function">
    <text evidence="1">Produces ATP from ADP in the presence of a proton gradient across the membrane. The alpha chain is a regulatory subunit.</text>
</comment>
<comment type="catalytic activity">
    <reaction evidence="1">
        <text>ATP + H2O + 4 H(+)(in) = ADP + phosphate + 5 H(+)(out)</text>
        <dbReference type="Rhea" id="RHEA:57720"/>
        <dbReference type="ChEBI" id="CHEBI:15377"/>
        <dbReference type="ChEBI" id="CHEBI:15378"/>
        <dbReference type="ChEBI" id="CHEBI:30616"/>
        <dbReference type="ChEBI" id="CHEBI:43474"/>
        <dbReference type="ChEBI" id="CHEBI:456216"/>
        <dbReference type="EC" id="7.1.2.2"/>
    </reaction>
</comment>
<comment type="subunit">
    <text evidence="1">F-type ATPases have 2 components, CF(1) - the catalytic core - and CF(0) - the membrane proton channel. CF(1) has five subunits: alpha(3), beta(3), gamma(1), delta(1), epsilon(1). CF(0) has three main subunits: a(1), b(2) and c(9-12). The alpha and beta chains form an alternating ring which encloses part of the gamma chain. CF(1) is attached to CF(0) by a central stalk formed by the gamma and epsilon chains, while a peripheral stalk is formed by the delta and b chains.</text>
</comment>
<comment type="subcellular location">
    <subcellularLocation>
        <location evidence="1">Cell inner membrane</location>
        <topology evidence="1">Peripheral membrane protein</topology>
    </subcellularLocation>
</comment>
<comment type="similarity">
    <text evidence="1">Belongs to the ATPase alpha/beta chains family.</text>
</comment>
<protein>
    <recommendedName>
        <fullName evidence="1">ATP synthase subunit alpha 2</fullName>
        <ecNumber evidence="1">7.1.2.2</ecNumber>
    </recommendedName>
    <alternativeName>
        <fullName evidence="1">ATP synthase F1 sector subunit alpha 2</fullName>
    </alternativeName>
    <alternativeName>
        <fullName evidence="1">F-ATPase subunit alpha 2</fullName>
    </alternativeName>
</protein>
<reference key="1">
    <citation type="journal article" date="2010" name="Genome Biol. Evol.">
        <title>Continuing evolution of Burkholderia mallei through genome reduction and large-scale rearrangements.</title>
        <authorList>
            <person name="Losada L."/>
            <person name="Ronning C.M."/>
            <person name="DeShazer D."/>
            <person name="Woods D."/>
            <person name="Fedorova N."/>
            <person name="Kim H.S."/>
            <person name="Shabalina S.A."/>
            <person name="Pearson T.R."/>
            <person name="Brinkac L."/>
            <person name="Tan P."/>
            <person name="Nandi T."/>
            <person name="Crabtree J."/>
            <person name="Badger J."/>
            <person name="Beckstrom-Sternberg S."/>
            <person name="Saqib M."/>
            <person name="Schutzer S.E."/>
            <person name="Keim P."/>
            <person name="Nierman W.C."/>
        </authorList>
    </citation>
    <scope>NUCLEOTIDE SEQUENCE [LARGE SCALE GENOMIC DNA]</scope>
    <source>
        <strain>668</strain>
    </source>
</reference>
<sequence length="670" mass="70262">MTPTPDAPAAADAATGAGWLARRRGALARVALAPVAQAIGRVERVADGIAFVSGLEDTMLNEVLRFEGGVTGFAHTLDEDLISVVLLDPDAGVRAQTAVARTGAVLEVPAGPQLLGRVVDPLGRPLDGGAPLDAAHTLPIERAAPAIIERDLVSEPLDTGVLIVDALFTIGRGQRELIIGDRATGKTSLAIDAIVNQRHSDVICVYVAIGQRASAVRRVIDAVRRYGAPERCVFVVAPAACAPGLQWIAPFAGFSIAEYFRDRGQHALVVVDDLTKHAATHRELALLTREPPGREAYPGDIFYVHARLLERAAKLSAALGGGSLSALPIAETDAGNLAAYIPTNLISITDGQIVLDSALFAANQRPAVDVGLSVSRVGGKAQHPALRAASGRLRLDYAQFLELEAFTRFGGLTDARLRAQITRGERIRALITQPRFRALRTLDEVVLLKALAAGALDAMSPDLVAPLRERLPAWLDARIAALTPALAPPRDWLADDAALDALAESVGELIERIAADAAHRATAGMPAEDAAGDIGGAFGGEQARGDADRDADHGANREVSREVSPEASREVSREVSREVSHEADRDAAADAARVAGRAPGRAEPDRAAPRAMPDGPPRAQADGDRASASRPRPDARGDAARTAPSPQGGAEVNVNAAANVDAEAEARHKR</sequence>